<dbReference type="EC" id="2.7.7.48"/>
<dbReference type="EMBL" id="DQ870485">
    <property type="protein sequence ID" value="ABI60844.1"/>
    <property type="molecule type" value="Genomic_RNA"/>
</dbReference>
<dbReference type="EMBL" id="AF044361">
    <property type="protein sequence ID" value="AAF19588.1"/>
    <property type="molecule type" value="Genomic_RNA"/>
</dbReference>
<dbReference type="EMBL" id="AF106303">
    <property type="protein sequence ID" value="AAD47317.1"/>
    <property type="molecule type" value="Genomic_RNA"/>
</dbReference>
<dbReference type="SMR" id="A7J390"/>
<dbReference type="GO" id="GO:0044423">
    <property type="term" value="C:virion component"/>
    <property type="evidence" value="ECO:0007669"/>
    <property type="project" value="UniProtKB-KW"/>
</dbReference>
<dbReference type="GO" id="GO:0000166">
    <property type="term" value="F:nucleotide binding"/>
    <property type="evidence" value="ECO:0007669"/>
    <property type="project" value="UniProtKB-KW"/>
</dbReference>
<dbReference type="GO" id="GO:0003723">
    <property type="term" value="F:RNA binding"/>
    <property type="evidence" value="ECO:0007669"/>
    <property type="project" value="UniProtKB-KW"/>
</dbReference>
<dbReference type="GO" id="GO:0003968">
    <property type="term" value="F:RNA-directed RNA polymerase activity"/>
    <property type="evidence" value="ECO:0007669"/>
    <property type="project" value="UniProtKB-KW"/>
</dbReference>
<dbReference type="GO" id="GO:0006351">
    <property type="term" value="P:DNA-templated transcription"/>
    <property type="evidence" value="ECO:0007669"/>
    <property type="project" value="InterPro"/>
</dbReference>
<dbReference type="GO" id="GO:0019079">
    <property type="term" value="P:viral genome replication"/>
    <property type="evidence" value="ECO:0007669"/>
    <property type="project" value="InterPro"/>
</dbReference>
<dbReference type="Gene3D" id="1.10.357.80">
    <property type="match status" value="2"/>
</dbReference>
<dbReference type="Gene3D" id="1.20.120.1390">
    <property type="match status" value="1"/>
</dbReference>
<dbReference type="Gene3D" id="3.30.230.140">
    <property type="match status" value="2"/>
</dbReference>
<dbReference type="Gene3D" id="3.30.70.2480">
    <property type="match status" value="1"/>
</dbReference>
<dbReference type="Gene3D" id="1.10.10.1990">
    <property type="entry name" value="Viral RNA-directed RNA polymerase, 4-helical domain"/>
    <property type="match status" value="1"/>
</dbReference>
<dbReference type="InterPro" id="IPR043502">
    <property type="entry name" value="DNA/RNA_pol_sf"/>
</dbReference>
<dbReference type="InterPro" id="IPR042032">
    <property type="entry name" value="RNA-dir_pol_4-hel_dom"/>
</dbReference>
<dbReference type="InterPro" id="IPR001795">
    <property type="entry name" value="RNA-dir_pol_luteovirus"/>
</dbReference>
<dbReference type="InterPro" id="IPR007097">
    <property type="entry name" value="RNA-dir_pol_reovirus"/>
</dbReference>
<dbReference type="InterPro" id="IPR022071">
    <property type="entry name" value="Rotavirus_VP1_C"/>
</dbReference>
<dbReference type="Pfam" id="PF02123">
    <property type="entry name" value="RdRP_4"/>
    <property type="match status" value="1"/>
</dbReference>
<dbReference type="Pfam" id="PF12289">
    <property type="entry name" value="Rotavirus_VP1"/>
    <property type="match status" value="1"/>
</dbReference>
<dbReference type="SUPFAM" id="SSF56672">
    <property type="entry name" value="DNA/RNA polymerases"/>
    <property type="match status" value="1"/>
</dbReference>
<dbReference type="PROSITE" id="PS50523">
    <property type="entry name" value="RDRP_DSRNA_REO"/>
    <property type="match status" value="1"/>
</dbReference>
<keyword id="KW-0460">Magnesium</keyword>
<keyword id="KW-0547">Nucleotide-binding</keyword>
<keyword id="KW-0548">Nucleotidyltransferase</keyword>
<keyword id="KW-0694">RNA-binding</keyword>
<keyword id="KW-0696">RNA-directed RNA polymerase</keyword>
<keyword id="KW-0808">Transferase</keyword>
<keyword id="KW-0693">Viral RNA replication</keyword>
<keyword id="KW-0946">Virion</keyword>
<feature type="chain" id="PRO_0000368041" description="RNA-directed RNA polymerase">
    <location>
        <begin position="1"/>
        <end position="1088"/>
    </location>
</feature>
<feature type="domain" description="RdRp catalytic" evidence="2">
    <location>
        <begin position="501"/>
        <end position="687"/>
    </location>
</feature>
<feature type="sequence conflict" description="In Ref. 3; AAD47317." evidence="3" ref="3">
    <original>M</original>
    <variation>W</variation>
    <location>
        <position position="146"/>
    </location>
</feature>
<comment type="function">
    <text evidence="2">RNA-directed RNA polymerase that is involved in both transcription and genome replication. Together with VP3 capping enzyme, forms an enzyme complex positioned near the channels situated at each of the five-fold vertices of the core. Following infection, the outermost layer of the virus is lost, leaving a double-layered particle (DLP) made up of the core and VP6 shell. VP1 then catalyzes the transcription of fully conservative plus-strand genomic RNAs that are extruded through the DLP's channels into the cytoplasm where they function as mRNAs for translation of viral proteins. One copy of each of the viral (+)RNAs is also recruited during core assembly, together with newly synthesized polymerase complexes and VP2. The polymerase of these novo-formed particles catalyzes the synthesis of complementary minus-strands leading to dsRNA formation. To do so, the polymerase specifically recognizes and binds 4 bases 5'-UGUG-3' in the conserved 3'-sequence of plus-strand RNA templates. VP2 presumably activates the autoinhibited VP1-RNA complex to coordinate packaging and genome replication. Once dsRNA synthesis is complete, the polymerase switches to the transcriptional mode, thus providing secondary transcription (By similarity).</text>
</comment>
<comment type="catalytic activity">
    <reaction evidence="2">
        <text>RNA(n) + a ribonucleoside 5'-triphosphate = RNA(n+1) + diphosphate</text>
        <dbReference type="Rhea" id="RHEA:21248"/>
        <dbReference type="Rhea" id="RHEA-COMP:14527"/>
        <dbReference type="Rhea" id="RHEA-COMP:17342"/>
        <dbReference type="ChEBI" id="CHEBI:33019"/>
        <dbReference type="ChEBI" id="CHEBI:61557"/>
        <dbReference type="ChEBI" id="CHEBI:140395"/>
        <dbReference type="EC" id="2.7.7.48"/>
    </reaction>
</comment>
<comment type="cofactor">
    <cofactor evidence="3">
        <name>Mg(2+)</name>
        <dbReference type="ChEBI" id="CHEBI:18420"/>
    </cofactor>
</comment>
<comment type="subunit">
    <text evidence="1 3">Interacts with VP3 (Potential). Interacts with VP2; this interaction activates VP1. Interacts with NSP5; this interaction is probably necessary for the formation of functional virus factories. Interacts with NSP2; this interaction is weak (By similarity).</text>
</comment>
<comment type="subcellular location">
    <subcellularLocation>
        <location evidence="3">Virion</location>
    </subcellularLocation>
    <text evidence="1">Attached inside the inner capsid as a minor component. Also found in spherical cytoplasmic structures, called virus factories, that appear early after infection and are the site of viral replication and packaging (By similarity).</text>
</comment>
<comment type="similarity">
    <text evidence="3">Belongs to the reoviridae RNA-directed RNA polymerase family.</text>
</comment>
<proteinExistence type="inferred from homology"/>
<evidence type="ECO:0000250" key="1"/>
<evidence type="ECO:0000255" key="2">
    <source>
        <dbReference type="PROSITE-ProRule" id="PRU00539"/>
    </source>
</evidence>
<evidence type="ECO:0000305" key="3"/>
<name>RDRP_ROTHS</name>
<sequence length="1088" mass="125083">MGKYNLILSEYLSFIYNSQSAVQIPIYYSSNSELENRCIEFHAKCLENSKNGLSLKKLFSEYSDVIQNATLLSILSYSYDKYNAVERKLVKYARSKPLEADLTVNELDYENNKITSELFPTEEEYTDSLMDPAILTSLSSNLNAVMFWLEKHENDTAEKLKIYKRRLDLFIIVASTVNKYGVPRHNAKYRYEYDVMKDKPYYLVTWANSSIEMLMSVFSHEDYLIAKELIVLSYSNRSTLAKLVSSPMSILVALVDINGTFITNEELELEFSNKYVRAIVPDQTFDELKQMLDNMRKAGLVDIPKMIQDWLIDCSIEKFSLMAKIYSWSFHVGFRKQKMLDAALDQLKTEYTEDVDDEMYREYTMLIRDEVVKMLEESVKHDDHLLQDSELAGLLSMSSASNGESRQLKFGRKTIFSTKKNMHVMDDMANGRYTPGIIPPVNADKPIPLGRRDVPGRRTRIIFILPYEYFIAQHAVVEKMLIYAKHTREYAEFYSQSNQLLSYGDVTRFLSNNAMVLYTDVSQWDSSQHNTQPFRKGIIMGLDILANMTNDAKVVQTLNLYKQTQINLMDSYVQIPDGNVIKKIQYGAVASGEKQTKAANSIANLALIKTVLSRISNKYSFATKIIRVDGDDNYAVLQFNTEVTKQMVQDVSNDVRETYARMNAKVKALVSTVGIEIAKRYIAGGKIFFRAGINLLNNEKRGQSTQWDQAAVLYSNYIVNRLRGFETDREFILTKIMQMTSVAITGSLRLFPSERVLTTNSTFKVFDSEDFIIEYGTTDDEVYIQRAFMSLSSQKSGIADEISASSTFKNYVSKLSEQLLFSKNNIVSRGIALTEKAKLNSYAPISLEKRRAQISALLTMLQKPVTFKSNKITINDILKDIKPFFTLSEAHLPMQYQKFMPTLPENVQYIIQCIGSRTYQIEDDGSKSAISRLISKYSVYKPSIEELYKVISLHENEIQLYLISLGIPKIDADTYVGSKIYSQDKYRILESYVYNLLSINYGCYQLFDFNSPDLEKLIRIPFKGKIPAVTFILHLYAKLEVINYAIKNGSWISLFCNYPKSEMIKLWKKMWNITSLRSPYTNANFFQD</sequence>
<organismHost>
    <name type="scientific">Homo sapiens</name>
    <name type="common">Human</name>
    <dbReference type="NCBI Taxonomy" id="9606"/>
</organismHost>
<reference key="1">
    <citation type="journal article" date="2008" name="J. Virol.">
        <title>Full genome-based classification of rotaviruses reveals a common origin between human Wa-Like and porcine rotavirus strains and human DS-1-like and bovine rotavirus strains.</title>
        <authorList>
            <person name="Matthijnssens J."/>
            <person name="Ciarlet M."/>
            <person name="Heiman E.M."/>
            <person name="Arijs I."/>
            <person name="Delbeke T."/>
            <person name="McDonald S.M."/>
            <person name="Palombo E.A."/>
            <person name="Iturriza-Gomara M."/>
            <person name="Maes P."/>
            <person name="Patton J.T."/>
            <person name="Rahman M."/>
            <person name="Van Ranst M."/>
        </authorList>
    </citation>
    <scope>NUCLEOTIDE SEQUENCE [GENOMIC RNA]</scope>
</reference>
<reference key="2">
    <citation type="submission" date="1998-01" db="EMBL/GenBank/DDBJ databases">
        <authorList>
            <person name="Lee C.N."/>
            <person name="Zao C.L."/>
        </authorList>
    </citation>
    <scope>NUCLEOTIDE SEQUENCE [GENOMIC RNA] OF 8-178</scope>
</reference>
<reference key="3">
    <citation type="journal article" date="1999" name="J. Gen. Virol.">
        <title>Sequence analysis of VP1 and VP7 genes suggests occurrence of a reassortant of G2 rotavirus responsible for an epidemic of gastroenteritis.</title>
        <authorList>
            <person name="Zao C.L."/>
            <person name="Yu W.N."/>
            <person name="Kao C.L."/>
            <person name="Taniguchi K."/>
            <person name="Lee C.Y."/>
            <person name="Lee C.N."/>
        </authorList>
    </citation>
    <scope>NUCLEOTIDE SEQUENCE [GENOMIC RNA] OF 10-150</scope>
</reference>
<accession>A7J390</accession>
<accession>Q9QAU6</accession>
<accession>Q9QRZ8</accession>
<protein>
    <recommendedName>
        <fullName>RNA-directed RNA polymerase</fullName>
        <ecNumber>2.7.7.48</ecNumber>
    </recommendedName>
    <alternativeName>
        <fullName>Protein VP1</fullName>
    </alternativeName>
</protein>
<organism>
    <name type="scientific">Rotavirus A (strain RVA/Human/Japan/S2/1980/G2P1B[4])</name>
    <name type="common">RV-A</name>
    <dbReference type="NCBI Taxonomy" id="10959"/>
    <lineage>
        <taxon>Viruses</taxon>
        <taxon>Riboviria</taxon>
        <taxon>Orthornavirae</taxon>
        <taxon>Duplornaviricota</taxon>
        <taxon>Resentoviricetes</taxon>
        <taxon>Reovirales</taxon>
        <taxon>Sedoreoviridae</taxon>
        <taxon>Rotavirus</taxon>
        <taxon>Rotavirus A</taxon>
    </lineage>
</organism>